<sequence length="121" mass="13529">MARIAGINIPPQQHAEIGLTAIFGVGRTRARKICEAAGVPVTKKVKDLTDAELERIREHLGVFTVEGDLRREVQLSIKRLIDLGTYRGMRHKRGLPVRGQRTRTNARTRKGPRRAAASLKK</sequence>
<reference key="1">
    <citation type="journal article" date="2006" name="J. Bacteriol.">
        <title>Comparison of the genome sequence of the poultry pathogen Bordetella avium with those of B. bronchiseptica, B. pertussis, and B. parapertussis reveals extensive diversity in surface structures associated with host interaction.</title>
        <authorList>
            <person name="Sebaihia M."/>
            <person name="Preston A."/>
            <person name="Maskell D.J."/>
            <person name="Kuzmiak H."/>
            <person name="Connell T.D."/>
            <person name="King N.D."/>
            <person name="Orndorff P.E."/>
            <person name="Miyamoto D.M."/>
            <person name="Thomson N.R."/>
            <person name="Harris D."/>
            <person name="Goble A."/>
            <person name="Lord A."/>
            <person name="Murphy L."/>
            <person name="Quail M.A."/>
            <person name="Rutter S."/>
            <person name="Squares R."/>
            <person name="Squares S."/>
            <person name="Woodward J."/>
            <person name="Parkhill J."/>
            <person name="Temple L.M."/>
        </authorList>
    </citation>
    <scope>NUCLEOTIDE SEQUENCE [LARGE SCALE GENOMIC DNA]</scope>
    <source>
        <strain>197N</strain>
    </source>
</reference>
<proteinExistence type="inferred from homology"/>
<evidence type="ECO:0000255" key="1">
    <source>
        <dbReference type="HAMAP-Rule" id="MF_01315"/>
    </source>
</evidence>
<evidence type="ECO:0000256" key="2">
    <source>
        <dbReference type="SAM" id="MobiDB-lite"/>
    </source>
</evidence>
<evidence type="ECO:0000305" key="3"/>
<feature type="chain" id="PRO_0000306569" description="Small ribosomal subunit protein uS13">
    <location>
        <begin position="1"/>
        <end position="121"/>
    </location>
</feature>
<feature type="region of interest" description="Disordered" evidence="2">
    <location>
        <begin position="91"/>
        <end position="121"/>
    </location>
</feature>
<keyword id="KW-1185">Reference proteome</keyword>
<keyword id="KW-0687">Ribonucleoprotein</keyword>
<keyword id="KW-0689">Ribosomal protein</keyword>
<keyword id="KW-0694">RNA-binding</keyword>
<keyword id="KW-0699">rRNA-binding</keyword>
<keyword id="KW-0820">tRNA-binding</keyword>
<protein>
    <recommendedName>
        <fullName evidence="1">Small ribosomal subunit protein uS13</fullName>
    </recommendedName>
    <alternativeName>
        <fullName evidence="3">30S ribosomal protein S13</fullName>
    </alternativeName>
</protein>
<name>RS13_BORA1</name>
<gene>
    <name evidence="1" type="primary">rpsM</name>
    <name type="ordered locus">BAV0057</name>
</gene>
<accession>Q2L248</accession>
<organism>
    <name type="scientific">Bordetella avium (strain 197N)</name>
    <dbReference type="NCBI Taxonomy" id="360910"/>
    <lineage>
        <taxon>Bacteria</taxon>
        <taxon>Pseudomonadati</taxon>
        <taxon>Pseudomonadota</taxon>
        <taxon>Betaproteobacteria</taxon>
        <taxon>Burkholderiales</taxon>
        <taxon>Alcaligenaceae</taxon>
        <taxon>Bordetella</taxon>
    </lineage>
</organism>
<dbReference type="EMBL" id="AM167904">
    <property type="protein sequence ID" value="CAJ47641.1"/>
    <property type="molecule type" value="Genomic_DNA"/>
</dbReference>
<dbReference type="RefSeq" id="WP_012415761.1">
    <property type="nucleotide sequence ID" value="NC_010645.1"/>
</dbReference>
<dbReference type="SMR" id="Q2L248"/>
<dbReference type="STRING" id="360910.BAV0057"/>
<dbReference type="GeneID" id="92936698"/>
<dbReference type="KEGG" id="bav:BAV0057"/>
<dbReference type="eggNOG" id="COG0099">
    <property type="taxonomic scope" value="Bacteria"/>
</dbReference>
<dbReference type="HOGENOM" id="CLU_103849_1_2_4"/>
<dbReference type="OrthoDB" id="9803610at2"/>
<dbReference type="Proteomes" id="UP000001977">
    <property type="component" value="Chromosome"/>
</dbReference>
<dbReference type="GO" id="GO:0005829">
    <property type="term" value="C:cytosol"/>
    <property type="evidence" value="ECO:0007669"/>
    <property type="project" value="TreeGrafter"/>
</dbReference>
<dbReference type="GO" id="GO:0015935">
    <property type="term" value="C:small ribosomal subunit"/>
    <property type="evidence" value="ECO:0007669"/>
    <property type="project" value="TreeGrafter"/>
</dbReference>
<dbReference type="GO" id="GO:0019843">
    <property type="term" value="F:rRNA binding"/>
    <property type="evidence" value="ECO:0007669"/>
    <property type="project" value="UniProtKB-UniRule"/>
</dbReference>
<dbReference type="GO" id="GO:0003735">
    <property type="term" value="F:structural constituent of ribosome"/>
    <property type="evidence" value="ECO:0007669"/>
    <property type="project" value="InterPro"/>
</dbReference>
<dbReference type="GO" id="GO:0000049">
    <property type="term" value="F:tRNA binding"/>
    <property type="evidence" value="ECO:0007669"/>
    <property type="project" value="UniProtKB-UniRule"/>
</dbReference>
<dbReference type="GO" id="GO:0006412">
    <property type="term" value="P:translation"/>
    <property type="evidence" value="ECO:0007669"/>
    <property type="project" value="UniProtKB-UniRule"/>
</dbReference>
<dbReference type="FunFam" id="1.10.8.50:FF:000001">
    <property type="entry name" value="30S ribosomal protein S13"/>
    <property type="match status" value="1"/>
</dbReference>
<dbReference type="FunFam" id="4.10.910.10:FF:000001">
    <property type="entry name" value="30S ribosomal protein S13"/>
    <property type="match status" value="1"/>
</dbReference>
<dbReference type="Gene3D" id="1.10.8.50">
    <property type="match status" value="1"/>
</dbReference>
<dbReference type="Gene3D" id="4.10.910.10">
    <property type="entry name" value="30s ribosomal protein s13, domain 2"/>
    <property type="match status" value="1"/>
</dbReference>
<dbReference type="HAMAP" id="MF_01315">
    <property type="entry name" value="Ribosomal_uS13"/>
    <property type="match status" value="1"/>
</dbReference>
<dbReference type="InterPro" id="IPR027437">
    <property type="entry name" value="Rbsml_uS13_C"/>
</dbReference>
<dbReference type="InterPro" id="IPR001892">
    <property type="entry name" value="Ribosomal_uS13"/>
</dbReference>
<dbReference type="InterPro" id="IPR010979">
    <property type="entry name" value="Ribosomal_uS13-like_H2TH"/>
</dbReference>
<dbReference type="InterPro" id="IPR019980">
    <property type="entry name" value="Ribosomal_uS13_bac-type"/>
</dbReference>
<dbReference type="InterPro" id="IPR018269">
    <property type="entry name" value="Ribosomal_uS13_CS"/>
</dbReference>
<dbReference type="NCBIfam" id="TIGR03631">
    <property type="entry name" value="uS13_bact"/>
    <property type="match status" value="1"/>
</dbReference>
<dbReference type="PANTHER" id="PTHR10871">
    <property type="entry name" value="30S RIBOSOMAL PROTEIN S13/40S RIBOSOMAL PROTEIN S18"/>
    <property type="match status" value="1"/>
</dbReference>
<dbReference type="PANTHER" id="PTHR10871:SF1">
    <property type="entry name" value="SMALL RIBOSOMAL SUBUNIT PROTEIN US13M"/>
    <property type="match status" value="1"/>
</dbReference>
<dbReference type="Pfam" id="PF00416">
    <property type="entry name" value="Ribosomal_S13"/>
    <property type="match status" value="2"/>
</dbReference>
<dbReference type="PIRSF" id="PIRSF002134">
    <property type="entry name" value="Ribosomal_S13"/>
    <property type="match status" value="1"/>
</dbReference>
<dbReference type="SUPFAM" id="SSF46946">
    <property type="entry name" value="S13-like H2TH domain"/>
    <property type="match status" value="1"/>
</dbReference>
<dbReference type="PROSITE" id="PS00646">
    <property type="entry name" value="RIBOSOMAL_S13_1"/>
    <property type="match status" value="1"/>
</dbReference>
<dbReference type="PROSITE" id="PS50159">
    <property type="entry name" value="RIBOSOMAL_S13_2"/>
    <property type="match status" value="1"/>
</dbReference>
<comment type="function">
    <text evidence="1">Located at the top of the head of the 30S subunit, it contacts several helices of the 16S rRNA. In the 70S ribosome it contacts the 23S rRNA (bridge B1a) and protein L5 of the 50S subunit (bridge B1b), connecting the 2 subunits; these bridges are implicated in subunit movement. Contacts the tRNAs in the A and P-sites.</text>
</comment>
<comment type="subunit">
    <text evidence="1">Part of the 30S ribosomal subunit. Forms a loose heterodimer with protein S19. Forms two bridges to the 50S subunit in the 70S ribosome.</text>
</comment>
<comment type="similarity">
    <text evidence="1">Belongs to the universal ribosomal protein uS13 family.</text>
</comment>